<sequence length="484" mass="51905">MHEKTVAEIAAALRAGEFSSREVTEAFLARIDALNPVTNAVITPTPEQALAAADAADQRIAAGEAGPLTGVPLVHKDIFCTQGVRTSCGSRMLDNFTAPYDATVVGKLADAGMVMLGKANMDEFAMGSSNETSYYGPVKNPWDLDAVPGGSSGGSAAAVAGRLAPAATGTDTGGSIRQPAALCGLSGLKPTYGRVSRYGMIAFASSLDQGGPMARTCEDLALLLGGMAGFDTRDSTSVDHVVPDYTETLNRSVKGLKIGVPKEFFGEGLDPEVRRVVEAAIEVYREEGAEIREISLPNTRHSVPVYYVIAPAEASSNLSRYDGVRYGYRCEDPSDLEDLYKRSRGEGFGEEVKRRILVGTYALSAGYYDAYYLKAQQVRRLIRDDFTRALQAVDVIMGPTSPTVAFNIGERTDDPVQMYLSDVYTLAVNLAGVPGLSIPAGFAQGRPVGLQIIGDYFDEARLLNVGHKYQQVTDWHRQVPQGFE</sequence>
<gene>
    <name evidence="1" type="primary">gatA</name>
    <name type="ordered locus">Mlg_0167</name>
</gene>
<comment type="function">
    <text evidence="1">Allows the formation of correctly charged Gln-tRNA(Gln) through the transamidation of misacylated Glu-tRNA(Gln) in organisms which lack glutaminyl-tRNA synthetase. The reaction takes place in the presence of glutamine and ATP through an activated gamma-phospho-Glu-tRNA(Gln).</text>
</comment>
<comment type="catalytic activity">
    <reaction evidence="1">
        <text>L-glutamyl-tRNA(Gln) + L-glutamine + ATP + H2O = L-glutaminyl-tRNA(Gln) + L-glutamate + ADP + phosphate + H(+)</text>
        <dbReference type="Rhea" id="RHEA:17521"/>
        <dbReference type="Rhea" id="RHEA-COMP:9681"/>
        <dbReference type="Rhea" id="RHEA-COMP:9684"/>
        <dbReference type="ChEBI" id="CHEBI:15377"/>
        <dbReference type="ChEBI" id="CHEBI:15378"/>
        <dbReference type="ChEBI" id="CHEBI:29985"/>
        <dbReference type="ChEBI" id="CHEBI:30616"/>
        <dbReference type="ChEBI" id="CHEBI:43474"/>
        <dbReference type="ChEBI" id="CHEBI:58359"/>
        <dbReference type="ChEBI" id="CHEBI:78520"/>
        <dbReference type="ChEBI" id="CHEBI:78521"/>
        <dbReference type="ChEBI" id="CHEBI:456216"/>
        <dbReference type="EC" id="6.3.5.7"/>
    </reaction>
</comment>
<comment type="subunit">
    <text evidence="1">Heterotrimer of A, B and C subunits.</text>
</comment>
<comment type="similarity">
    <text evidence="1">Belongs to the amidase family. GatA subfamily.</text>
</comment>
<evidence type="ECO:0000255" key="1">
    <source>
        <dbReference type="HAMAP-Rule" id="MF_00120"/>
    </source>
</evidence>
<name>GATA_ALKEH</name>
<feature type="chain" id="PRO_1000015796" description="Glutamyl-tRNA(Gln) amidotransferase subunit A">
    <location>
        <begin position="1"/>
        <end position="484"/>
    </location>
</feature>
<feature type="active site" description="Charge relay system" evidence="1">
    <location>
        <position position="76"/>
    </location>
</feature>
<feature type="active site" description="Charge relay system" evidence="1">
    <location>
        <position position="151"/>
    </location>
</feature>
<feature type="active site" description="Acyl-ester intermediate" evidence="1">
    <location>
        <position position="175"/>
    </location>
</feature>
<dbReference type="EC" id="6.3.5.7" evidence="1"/>
<dbReference type="EMBL" id="CP000453">
    <property type="protein sequence ID" value="ABI55522.1"/>
    <property type="molecule type" value="Genomic_DNA"/>
</dbReference>
<dbReference type="RefSeq" id="WP_011627918.1">
    <property type="nucleotide sequence ID" value="NC_008340.1"/>
</dbReference>
<dbReference type="SMR" id="Q0ACB5"/>
<dbReference type="KEGG" id="aeh:Mlg_0167"/>
<dbReference type="eggNOG" id="COG0154">
    <property type="taxonomic scope" value="Bacteria"/>
</dbReference>
<dbReference type="HOGENOM" id="CLU_009600_0_3_6"/>
<dbReference type="OrthoDB" id="9811471at2"/>
<dbReference type="Proteomes" id="UP000001962">
    <property type="component" value="Chromosome"/>
</dbReference>
<dbReference type="GO" id="GO:0030956">
    <property type="term" value="C:glutamyl-tRNA(Gln) amidotransferase complex"/>
    <property type="evidence" value="ECO:0007669"/>
    <property type="project" value="InterPro"/>
</dbReference>
<dbReference type="GO" id="GO:0005524">
    <property type="term" value="F:ATP binding"/>
    <property type="evidence" value="ECO:0007669"/>
    <property type="project" value="UniProtKB-KW"/>
</dbReference>
<dbReference type="GO" id="GO:0050567">
    <property type="term" value="F:glutaminyl-tRNA synthase (glutamine-hydrolyzing) activity"/>
    <property type="evidence" value="ECO:0007669"/>
    <property type="project" value="UniProtKB-UniRule"/>
</dbReference>
<dbReference type="GO" id="GO:0006412">
    <property type="term" value="P:translation"/>
    <property type="evidence" value="ECO:0007669"/>
    <property type="project" value="UniProtKB-UniRule"/>
</dbReference>
<dbReference type="Gene3D" id="3.90.1300.10">
    <property type="entry name" value="Amidase signature (AS) domain"/>
    <property type="match status" value="1"/>
</dbReference>
<dbReference type="HAMAP" id="MF_00120">
    <property type="entry name" value="GatA"/>
    <property type="match status" value="1"/>
</dbReference>
<dbReference type="InterPro" id="IPR000120">
    <property type="entry name" value="Amidase"/>
</dbReference>
<dbReference type="InterPro" id="IPR020556">
    <property type="entry name" value="Amidase_CS"/>
</dbReference>
<dbReference type="InterPro" id="IPR023631">
    <property type="entry name" value="Amidase_dom"/>
</dbReference>
<dbReference type="InterPro" id="IPR036928">
    <property type="entry name" value="AS_sf"/>
</dbReference>
<dbReference type="InterPro" id="IPR004412">
    <property type="entry name" value="GatA"/>
</dbReference>
<dbReference type="NCBIfam" id="TIGR00132">
    <property type="entry name" value="gatA"/>
    <property type="match status" value="1"/>
</dbReference>
<dbReference type="PANTHER" id="PTHR11895:SF151">
    <property type="entry name" value="GLUTAMYL-TRNA(GLN) AMIDOTRANSFERASE SUBUNIT A"/>
    <property type="match status" value="1"/>
</dbReference>
<dbReference type="PANTHER" id="PTHR11895">
    <property type="entry name" value="TRANSAMIDASE"/>
    <property type="match status" value="1"/>
</dbReference>
<dbReference type="Pfam" id="PF01425">
    <property type="entry name" value="Amidase"/>
    <property type="match status" value="1"/>
</dbReference>
<dbReference type="SUPFAM" id="SSF75304">
    <property type="entry name" value="Amidase signature (AS) enzymes"/>
    <property type="match status" value="1"/>
</dbReference>
<dbReference type="PROSITE" id="PS00571">
    <property type="entry name" value="AMIDASES"/>
    <property type="match status" value="1"/>
</dbReference>
<accession>Q0ACB5</accession>
<protein>
    <recommendedName>
        <fullName evidence="1">Glutamyl-tRNA(Gln) amidotransferase subunit A</fullName>
        <shortName evidence="1">Glu-ADT subunit A</shortName>
        <ecNumber evidence="1">6.3.5.7</ecNumber>
    </recommendedName>
</protein>
<reference key="1">
    <citation type="submission" date="2006-08" db="EMBL/GenBank/DDBJ databases">
        <title>Complete sequence of Alkalilimnicola ehrilichei MLHE-1.</title>
        <authorList>
            <person name="Copeland A."/>
            <person name="Lucas S."/>
            <person name="Lapidus A."/>
            <person name="Barry K."/>
            <person name="Detter J.C."/>
            <person name="Glavina del Rio T."/>
            <person name="Hammon N."/>
            <person name="Israni S."/>
            <person name="Dalin E."/>
            <person name="Tice H."/>
            <person name="Pitluck S."/>
            <person name="Sims D."/>
            <person name="Brettin T."/>
            <person name="Bruce D."/>
            <person name="Han C."/>
            <person name="Tapia R."/>
            <person name="Gilna P."/>
            <person name="Schmutz J."/>
            <person name="Larimer F."/>
            <person name="Land M."/>
            <person name="Hauser L."/>
            <person name="Kyrpides N."/>
            <person name="Mikhailova N."/>
            <person name="Oremland R.S."/>
            <person name="Hoeft S.E."/>
            <person name="Switzer-Blum J."/>
            <person name="Kulp T."/>
            <person name="King G."/>
            <person name="Tabita R."/>
            <person name="Witte B."/>
            <person name="Santini J.M."/>
            <person name="Basu P."/>
            <person name="Hollibaugh J.T."/>
            <person name="Xie G."/>
            <person name="Stolz J.F."/>
            <person name="Richardson P."/>
        </authorList>
    </citation>
    <scope>NUCLEOTIDE SEQUENCE [LARGE SCALE GENOMIC DNA]</scope>
    <source>
        <strain>ATCC BAA-1101 / DSM 17681 / MLHE-1</strain>
    </source>
</reference>
<proteinExistence type="inferred from homology"/>
<keyword id="KW-0067">ATP-binding</keyword>
<keyword id="KW-0436">Ligase</keyword>
<keyword id="KW-0547">Nucleotide-binding</keyword>
<keyword id="KW-0648">Protein biosynthesis</keyword>
<keyword id="KW-1185">Reference proteome</keyword>
<organism>
    <name type="scientific">Alkalilimnicola ehrlichii (strain ATCC BAA-1101 / DSM 17681 / MLHE-1)</name>
    <dbReference type="NCBI Taxonomy" id="187272"/>
    <lineage>
        <taxon>Bacteria</taxon>
        <taxon>Pseudomonadati</taxon>
        <taxon>Pseudomonadota</taxon>
        <taxon>Gammaproteobacteria</taxon>
        <taxon>Chromatiales</taxon>
        <taxon>Ectothiorhodospiraceae</taxon>
        <taxon>Alkalilimnicola</taxon>
    </lineage>
</organism>